<comment type="function">
    <text evidence="1">High affinity, high specificity proton-dependent sulfate transporter, which mediates sulfate uptake. Provides the sulfur source for the cysteine synthesis pathway.</text>
</comment>
<comment type="subcellular location">
    <subcellularLocation>
        <location evidence="1">Cell inner membrane</location>
        <topology evidence="1">Multi-pass membrane protein</topology>
    </subcellularLocation>
</comment>
<comment type="similarity">
    <text evidence="1">Belongs to the CysZ family.</text>
</comment>
<keyword id="KW-0028">Amino-acid biosynthesis</keyword>
<keyword id="KW-0997">Cell inner membrane</keyword>
<keyword id="KW-1003">Cell membrane</keyword>
<keyword id="KW-0198">Cysteine biosynthesis</keyword>
<keyword id="KW-0472">Membrane</keyword>
<keyword id="KW-0764">Sulfate transport</keyword>
<keyword id="KW-0812">Transmembrane</keyword>
<keyword id="KW-1133">Transmembrane helix</keyword>
<keyword id="KW-0813">Transport</keyword>
<organism>
    <name type="scientific">Escherichia coli (strain SE11)</name>
    <dbReference type="NCBI Taxonomy" id="409438"/>
    <lineage>
        <taxon>Bacteria</taxon>
        <taxon>Pseudomonadati</taxon>
        <taxon>Pseudomonadota</taxon>
        <taxon>Gammaproteobacteria</taxon>
        <taxon>Enterobacterales</taxon>
        <taxon>Enterobacteriaceae</taxon>
        <taxon>Escherichia</taxon>
    </lineage>
</organism>
<proteinExistence type="inferred from homology"/>
<sequence length="253" mass="29271">MVSSFTSAPRSGFYYFAQGWKLVSQPGIRRFVILPLLVNILLMGGAFWWLFTQLDVWIPTLMSYVPDWLQWLSYLLWPLAVISVLLVFGYFFSTIANWIAAPFNGLLAEQLEARLTGATPPDTGIFGIMKDVPRIMKREWQKFAWYLPRAIVLLILYLIPGIGQTVAPVLWFLFSAWMLAIQYCDYPFDNHKVPFKEMRTALRTRKITNMQFGALTSLFTMIPLLNLFIMPVAVCGATAMWVDCYRDKHAMWR</sequence>
<gene>
    <name evidence="1" type="primary">cysZ</name>
    <name type="ordered locus">ECSE_2704</name>
</gene>
<protein>
    <recommendedName>
        <fullName evidence="1">Sulfate transporter CysZ</fullName>
    </recommendedName>
</protein>
<feature type="chain" id="PRO_1000125498" description="Sulfate transporter CysZ">
    <location>
        <begin position="1"/>
        <end position="253"/>
    </location>
</feature>
<feature type="transmembrane region" description="Helical" evidence="1">
    <location>
        <begin position="31"/>
        <end position="51"/>
    </location>
</feature>
<feature type="transmembrane region" description="Helical" evidence="1">
    <location>
        <begin position="75"/>
        <end position="95"/>
    </location>
</feature>
<feature type="transmembrane region" description="Helical" evidence="1">
    <location>
        <begin position="151"/>
        <end position="171"/>
    </location>
</feature>
<feature type="transmembrane region" description="Helical" evidence="1">
    <location>
        <begin position="222"/>
        <end position="242"/>
    </location>
</feature>
<evidence type="ECO:0000255" key="1">
    <source>
        <dbReference type="HAMAP-Rule" id="MF_00468"/>
    </source>
</evidence>
<name>CYSZ_ECOSE</name>
<reference key="1">
    <citation type="journal article" date="2008" name="DNA Res.">
        <title>Complete genome sequence and comparative analysis of the wild-type commensal Escherichia coli strain SE11 isolated from a healthy adult.</title>
        <authorList>
            <person name="Oshima K."/>
            <person name="Toh H."/>
            <person name="Ogura Y."/>
            <person name="Sasamoto H."/>
            <person name="Morita H."/>
            <person name="Park S.-H."/>
            <person name="Ooka T."/>
            <person name="Iyoda S."/>
            <person name="Taylor T.D."/>
            <person name="Hayashi T."/>
            <person name="Itoh K."/>
            <person name="Hattori M."/>
        </authorList>
    </citation>
    <scope>NUCLEOTIDE SEQUENCE [LARGE SCALE GENOMIC DNA]</scope>
    <source>
        <strain>SE11</strain>
    </source>
</reference>
<accession>B6I4Z0</accession>
<dbReference type="EMBL" id="AP009240">
    <property type="protein sequence ID" value="BAG78228.1"/>
    <property type="molecule type" value="Genomic_DNA"/>
</dbReference>
<dbReference type="RefSeq" id="WP_000254843.1">
    <property type="nucleotide sequence ID" value="NC_011415.1"/>
</dbReference>
<dbReference type="SMR" id="B6I4Z0"/>
<dbReference type="KEGG" id="ecy:ECSE_2704"/>
<dbReference type="HOGENOM" id="CLU_070331_1_0_6"/>
<dbReference type="Proteomes" id="UP000008199">
    <property type="component" value="Chromosome"/>
</dbReference>
<dbReference type="GO" id="GO:0005886">
    <property type="term" value="C:plasma membrane"/>
    <property type="evidence" value="ECO:0007669"/>
    <property type="project" value="UniProtKB-SubCell"/>
</dbReference>
<dbReference type="GO" id="GO:0009675">
    <property type="term" value="F:high-affinity sulfate:proton symporter activity"/>
    <property type="evidence" value="ECO:0007669"/>
    <property type="project" value="TreeGrafter"/>
</dbReference>
<dbReference type="GO" id="GO:0019344">
    <property type="term" value="P:cysteine biosynthetic process"/>
    <property type="evidence" value="ECO:0007669"/>
    <property type="project" value="UniProtKB-UniRule"/>
</dbReference>
<dbReference type="GO" id="GO:0000103">
    <property type="term" value="P:sulfate assimilation"/>
    <property type="evidence" value="ECO:0007669"/>
    <property type="project" value="InterPro"/>
</dbReference>
<dbReference type="HAMAP" id="MF_00468">
    <property type="entry name" value="CysZ"/>
    <property type="match status" value="1"/>
</dbReference>
<dbReference type="InterPro" id="IPR050480">
    <property type="entry name" value="CysZ_sulfate_transptr"/>
</dbReference>
<dbReference type="InterPro" id="IPR022985">
    <property type="entry name" value="Sulfate_CysZ"/>
</dbReference>
<dbReference type="NCBIfam" id="NF003433">
    <property type="entry name" value="PRK04949.1"/>
    <property type="match status" value="1"/>
</dbReference>
<dbReference type="PANTHER" id="PTHR37468">
    <property type="entry name" value="SULFATE TRANSPORTER CYSZ"/>
    <property type="match status" value="1"/>
</dbReference>
<dbReference type="PANTHER" id="PTHR37468:SF1">
    <property type="entry name" value="SULFATE TRANSPORTER CYSZ"/>
    <property type="match status" value="1"/>
</dbReference>
<dbReference type="Pfam" id="PF07264">
    <property type="entry name" value="EI24"/>
    <property type="match status" value="1"/>
</dbReference>